<comment type="function">
    <text evidence="1">Ring cyclization and eight-electron oxidation of 3a-(2-amino-2-carboxyethyl)-4,5-dioxo-4,5,6,7,8,9-hexahydroquinoline-7,9-dicarboxylic-acid to PQQ.</text>
</comment>
<comment type="catalytic activity">
    <reaction evidence="1">
        <text>6-(2-amino-2-carboxyethyl)-7,8-dioxo-1,2,3,4,7,8-hexahydroquinoline-2,4-dicarboxylate + 3 O2 = pyrroloquinoline quinone + 2 H2O2 + 2 H2O + H(+)</text>
        <dbReference type="Rhea" id="RHEA:10692"/>
        <dbReference type="ChEBI" id="CHEBI:15377"/>
        <dbReference type="ChEBI" id="CHEBI:15378"/>
        <dbReference type="ChEBI" id="CHEBI:15379"/>
        <dbReference type="ChEBI" id="CHEBI:16240"/>
        <dbReference type="ChEBI" id="CHEBI:58442"/>
        <dbReference type="ChEBI" id="CHEBI:58778"/>
        <dbReference type="EC" id="1.3.3.11"/>
    </reaction>
</comment>
<comment type="pathway">
    <text evidence="1">Cofactor biosynthesis; pyrroloquinoline quinone biosynthesis.</text>
</comment>
<comment type="similarity">
    <text evidence="1">Belongs to the PqqC family.</text>
</comment>
<comment type="sequence caution" evidence="2">
    <conflict type="erroneous initiation">
        <sequence resource="EMBL-CDS" id="AAW74988"/>
    </conflict>
</comment>
<keyword id="KW-0560">Oxidoreductase</keyword>
<keyword id="KW-0884">PQQ biosynthesis</keyword>
<keyword id="KW-1185">Reference proteome</keyword>
<gene>
    <name evidence="1" type="primary">pqqC</name>
    <name type="ordered locus">XOO1734</name>
</gene>
<proteinExistence type="inferred from homology"/>
<evidence type="ECO:0000255" key="1">
    <source>
        <dbReference type="HAMAP-Rule" id="MF_00654"/>
    </source>
</evidence>
<evidence type="ECO:0000305" key="2"/>
<accession>Q5H233</accession>
<feature type="chain" id="PRO_0000219991" description="Pyrroloquinoline-quinone synthase">
    <location>
        <begin position="1"/>
        <end position="250"/>
    </location>
</feature>
<dbReference type="EC" id="1.3.3.11" evidence="1"/>
<dbReference type="EMBL" id="AE013598">
    <property type="protein sequence ID" value="AAW74988.1"/>
    <property type="status" value="ALT_INIT"/>
    <property type="molecule type" value="Genomic_DNA"/>
</dbReference>
<dbReference type="SMR" id="Q5H233"/>
<dbReference type="STRING" id="291331.XOO1734"/>
<dbReference type="KEGG" id="xoo:XOO1734"/>
<dbReference type="PATRIC" id="fig|291331.8.peg.1933"/>
<dbReference type="HOGENOM" id="CLU_080136_0_0_6"/>
<dbReference type="UniPathway" id="UPA00539"/>
<dbReference type="Proteomes" id="UP000006735">
    <property type="component" value="Chromosome"/>
</dbReference>
<dbReference type="GO" id="GO:0033732">
    <property type="term" value="F:pyrroloquinoline-quinone synthase activity"/>
    <property type="evidence" value="ECO:0007669"/>
    <property type="project" value="UniProtKB-EC"/>
</dbReference>
<dbReference type="GO" id="GO:0018189">
    <property type="term" value="P:pyrroloquinoline quinone biosynthetic process"/>
    <property type="evidence" value="ECO:0007669"/>
    <property type="project" value="UniProtKB-UniRule"/>
</dbReference>
<dbReference type="GO" id="GO:0006790">
    <property type="term" value="P:sulfur compound metabolic process"/>
    <property type="evidence" value="ECO:0007669"/>
    <property type="project" value="UniProtKB-ARBA"/>
</dbReference>
<dbReference type="Gene3D" id="1.20.910.10">
    <property type="entry name" value="Heme oxygenase-like"/>
    <property type="match status" value="1"/>
</dbReference>
<dbReference type="HAMAP" id="MF_00654">
    <property type="entry name" value="PQQ_syn_PqqC"/>
    <property type="match status" value="1"/>
</dbReference>
<dbReference type="InterPro" id="IPR016084">
    <property type="entry name" value="Haem_Oase-like_multi-hlx"/>
</dbReference>
<dbReference type="InterPro" id="IPR011845">
    <property type="entry name" value="PqqC"/>
</dbReference>
<dbReference type="InterPro" id="IPR039068">
    <property type="entry name" value="PqqC-like"/>
</dbReference>
<dbReference type="InterPro" id="IPR004305">
    <property type="entry name" value="Thiaminase-2/PQQC"/>
</dbReference>
<dbReference type="NCBIfam" id="TIGR02111">
    <property type="entry name" value="PQQ_syn_pqqC"/>
    <property type="match status" value="1"/>
</dbReference>
<dbReference type="PANTHER" id="PTHR40279:SF3">
    <property type="entry name" value="4-AMINOBENZOATE SYNTHASE"/>
    <property type="match status" value="1"/>
</dbReference>
<dbReference type="PANTHER" id="PTHR40279">
    <property type="entry name" value="PQQC-LIKE PROTEIN"/>
    <property type="match status" value="1"/>
</dbReference>
<dbReference type="Pfam" id="PF03070">
    <property type="entry name" value="TENA_THI-4"/>
    <property type="match status" value="1"/>
</dbReference>
<dbReference type="SUPFAM" id="SSF48613">
    <property type="entry name" value="Heme oxygenase-like"/>
    <property type="match status" value="1"/>
</dbReference>
<sequence>MSALLSPDQLEADLRAIGARLYHDQHPFHALLHHGKLDRGQVQAWALNRFEYQRCIPLKDAAILARMEDPALRRIWRQRIVDHDGNSATDGGIARWLHLTDALGLDRTLVESGRALLPGTRFAVQAYLQFVSEKSLLEAIASSLTELFAPNIIGQRVAGMLKHYDFVSSDALAYFEHRLTEAPRDSDFALDYVKQHADTVEKQALVKAALHFKCSVLWAQLDALHVAYVTPGIVWPDAFVPDRDASRVAA</sequence>
<name>PQQC_XANOR</name>
<organism>
    <name type="scientific">Xanthomonas oryzae pv. oryzae (strain KACC10331 / KXO85)</name>
    <dbReference type="NCBI Taxonomy" id="291331"/>
    <lineage>
        <taxon>Bacteria</taxon>
        <taxon>Pseudomonadati</taxon>
        <taxon>Pseudomonadota</taxon>
        <taxon>Gammaproteobacteria</taxon>
        <taxon>Lysobacterales</taxon>
        <taxon>Lysobacteraceae</taxon>
        <taxon>Xanthomonas</taxon>
    </lineage>
</organism>
<protein>
    <recommendedName>
        <fullName evidence="1">Pyrroloquinoline-quinone synthase</fullName>
        <ecNumber evidence="1">1.3.3.11</ecNumber>
    </recommendedName>
    <alternativeName>
        <fullName evidence="1">Coenzyme PQQ synthesis protein C</fullName>
    </alternativeName>
    <alternativeName>
        <fullName evidence="1">Pyrroloquinoline quinone biosynthesis protein C</fullName>
    </alternativeName>
</protein>
<reference key="1">
    <citation type="journal article" date="2005" name="Nucleic Acids Res.">
        <title>The genome sequence of Xanthomonas oryzae pathovar oryzae KACC10331, the bacterial blight pathogen of rice.</title>
        <authorList>
            <person name="Lee B.-M."/>
            <person name="Park Y.-J."/>
            <person name="Park D.-S."/>
            <person name="Kang H.-W."/>
            <person name="Kim J.-G."/>
            <person name="Song E.-S."/>
            <person name="Park I.-C."/>
            <person name="Yoon U.-H."/>
            <person name="Hahn J.-H."/>
            <person name="Koo B.-S."/>
            <person name="Lee G.-B."/>
            <person name="Kim H."/>
            <person name="Park H.-S."/>
            <person name="Yoon K.-O."/>
            <person name="Kim J.-H."/>
            <person name="Jung C.-H."/>
            <person name="Koh N.-H."/>
            <person name="Seo J.-S."/>
            <person name="Go S.-J."/>
        </authorList>
    </citation>
    <scope>NUCLEOTIDE SEQUENCE [LARGE SCALE GENOMIC DNA]</scope>
    <source>
        <strain>KACC10331 / KXO85</strain>
    </source>
</reference>